<organism>
    <name type="scientific">Staphylococcus aureus (strain MW2)</name>
    <dbReference type="NCBI Taxonomy" id="196620"/>
    <lineage>
        <taxon>Bacteria</taxon>
        <taxon>Bacillati</taxon>
        <taxon>Bacillota</taxon>
        <taxon>Bacilli</taxon>
        <taxon>Bacillales</taxon>
        <taxon>Staphylococcaceae</taxon>
        <taxon>Staphylococcus</taxon>
    </lineage>
</organism>
<name>ILVC_STAAW</name>
<comment type="function">
    <text evidence="1">Involved in the biosynthesis of branched-chain amino acids (BCAA). Catalyzes an alkyl-migration followed by a ketol-acid reduction of (S)-2-acetolactate (S2AL) to yield (R)-2,3-dihydroxy-isovalerate. In the isomerase reaction, S2AL is rearranged via a Mg-dependent methyl migration to produce 3-hydroxy-3-methyl-2-ketobutyrate (HMKB). In the reductase reaction, this 2-ketoacid undergoes a metal-dependent reduction by NADPH to yield (R)-2,3-dihydroxy-isovalerate.</text>
</comment>
<comment type="catalytic activity">
    <reaction evidence="1">
        <text>(2R)-2,3-dihydroxy-3-methylbutanoate + NADP(+) = (2S)-2-acetolactate + NADPH + H(+)</text>
        <dbReference type="Rhea" id="RHEA:22068"/>
        <dbReference type="ChEBI" id="CHEBI:15378"/>
        <dbReference type="ChEBI" id="CHEBI:49072"/>
        <dbReference type="ChEBI" id="CHEBI:57783"/>
        <dbReference type="ChEBI" id="CHEBI:58349"/>
        <dbReference type="ChEBI" id="CHEBI:58476"/>
        <dbReference type="EC" id="1.1.1.86"/>
    </reaction>
</comment>
<comment type="catalytic activity">
    <reaction evidence="1">
        <text>(2R,3R)-2,3-dihydroxy-3-methylpentanoate + NADP(+) = (S)-2-ethyl-2-hydroxy-3-oxobutanoate + NADPH + H(+)</text>
        <dbReference type="Rhea" id="RHEA:13493"/>
        <dbReference type="ChEBI" id="CHEBI:15378"/>
        <dbReference type="ChEBI" id="CHEBI:49256"/>
        <dbReference type="ChEBI" id="CHEBI:49258"/>
        <dbReference type="ChEBI" id="CHEBI:57783"/>
        <dbReference type="ChEBI" id="CHEBI:58349"/>
        <dbReference type="EC" id="1.1.1.86"/>
    </reaction>
</comment>
<comment type="cofactor">
    <cofactor evidence="1">
        <name>Mg(2+)</name>
        <dbReference type="ChEBI" id="CHEBI:18420"/>
    </cofactor>
    <text evidence="1">Binds 2 magnesium ions per subunit.</text>
</comment>
<comment type="pathway">
    <text evidence="1">Amino-acid biosynthesis; L-isoleucine biosynthesis; L-isoleucine from 2-oxobutanoate: step 2/4.</text>
</comment>
<comment type="pathway">
    <text evidence="1">Amino-acid biosynthesis; L-valine biosynthesis; L-valine from pyruvate: step 2/4.</text>
</comment>
<comment type="similarity">
    <text evidence="1">Belongs to the ketol-acid reductoisomerase family.</text>
</comment>
<sequence length="334" mass="37014">MTTVYYDQDVKTDALQGKKIAVVGYGSQGHAHAQNLKDNGYDVVIGIRPGRSFDKAKEDGFDVFPVAEAVKQADVIMVLLPDEIQGDVYKNEIEPNLEKHNALAFAHGFNIHFGVIQPPADVDVFLVAPKGPGHLVRRTFVEGSAVPSLFGIQQDASGQARNIALSYAKGIGATRAGVIETTFKEETETDLFGEQAVLCGGVSKLIQSGFETLVEAGYQPELAYFEVLHEMKLIVDLMYEGGMENVRYSISNTAEFGDYVSGPRVITPDVKENMKAVLTDIQNGNFSNRFIEDNKNGFKEFYKLREEQHGHQIEKVGRELREMMPFIKSKSIEK</sequence>
<dbReference type="EC" id="1.1.1.86" evidence="1"/>
<dbReference type="EMBL" id="BA000033">
    <property type="protein sequence ID" value="BAB95845.1"/>
    <property type="molecule type" value="Genomic_DNA"/>
</dbReference>
<dbReference type="RefSeq" id="WP_000214552.1">
    <property type="nucleotide sequence ID" value="NC_003923.1"/>
</dbReference>
<dbReference type="SMR" id="P65153"/>
<dbReference type="KEGG" id="sam:MW1980"/>
<dbReference type="HOGENOM" id="CLU_033821_0_1_9"/>
<dbReference type="UniPathway" id="UPA00047">
    <property type="reaction ID" value="UER00056"/>
</dbReference>
<dbReference type="UniPathway" id="UPA00049">
    <property type="reaction ID" value="UER00060"/>
</dbReference>
<dbReference type="GO" id="GO:0005829">
    <property type="term" value="C:cytosol"/>
    <property type="evidence" value="ECO:0007669"/>
    <property type="project" value="TreeGrafter"/>
</dbReference>
<dbReference type="GO" id="GO:0004455">
    <property type="term" value="F:ketol-acid reductoisomerase activity"/>
    <property type="evidence" value="ECO:0007669"/>
    <property type="project" value="UniProtKB-UniRule"/>
</dbReference>
<dbReference type="GO" id="GO:0000287">
    <property type="term" value="F:magnesium ion binding"/>
    <property type="evidence" value="ECO:0007669"/>
    <property type="project" value="UniProtKB-UniRule"/>
</dbReference>
<dbReference type="GO" id="GO:0050661">
    <property type="term" value="F:NADP binding"/>
    <property type="evidence" value="ECO:0007669"/>
    <property type="project" value="InterPro"/>
</dbReference>
<dbReference type="GO" id="GO:0009097">
    <property type="term" value="P:isoleucine biosynthetic process"/>
    <property type="evidence" value="ECO:0007669"/>
    <property type="project" value="UniProtKB-UniRule"/>
</dbReference>
<dbReference type="GO" id="GO:0009099">
    <property type="term" value="P:L-valine biosynthetic process"/>
    <property type="evidence" value="ECO:0007669"/>
    <property type="project" value="UniProtKB-UniRule"/>
</dbReference>
<dbReference type="FunFam" id="3.40.50.720:FF:000023">
    <property type="entry name" value="Ketol-acid reductoisomerase (NADP(+))"/>
    <property type="match status" value="1"/>
</dbReference>
<dbReference type="Gene3D" id="6.10.240.10">
    <property type="match status" value="1"/>
</dbReference>
<dbReference type="Gene3D" id="3.40.50.720">
    <property type="entry name" value="NAD(P)-binding Rossmann-like Domain"/>
    <property type="match status" value="1"/>
</dbReference>
<dbReference type="HAMAP" id="MF_00435">
    <property type="entry name" value="IlvC"/>
    <property type="match status" value="1"/>
</dbReference>
<dbReference type="InterPro" id="IPR008927">
    <property type="entry name" value="6-PGluconate_DH-like_C_sf"/>
</dbReference>
<dbReference type="InterPro" id="IPR013023">
    <property type="entry name" value="KARI"/>
</dbReference>
<dbReference type="InterPro" id="IPR000506">
    <property type="entry name" value="KARI_C"/>
</dbReference>
<dbReference type="InterPro" id="IPR013116">
    <property type="entry name" value="KARI_N"/>
</dbReference>
<dbReference type="InterPro" id="IPR014359">
    <property type="entry name" value="KARI_prok"/>
</dbReference>
<dbReference type="InterPro" id="IPR036291">
    <property type="entry name" value="NAD(P)-bd_dom_sf"/>
</dbReference>
<dbReference type="NCBIfam" id="TIGR00465">
    <property type="entry name" value="ilvC"/>
    <property type="match status" value="1"/>
</dbReference>
<dbReference type="NCBIfam" id="NF004017">
    <property type="entry name" value="PRK05479.1"/>
    <property type="match status" value="1"/>
</dbReference>
<dbReference type="NCBIfam" id="NF009940">
    <property type="entry name" value="PRK13403.1"/>
    <property type="match status" value="1"/>
</dbReference>
<dbReference type="PANTHER" id="PTHR21371">
    <property type="entry name" value="KETOL-ACID REDUCTOISOMERASE, MITOCHONDRIAL"/>
    <property type="match status" value="1"/>
</dbReference>
<dbReference type="PANTHER" id="PTHR21371:SF1">
    <property type="entry name" value="KETOL-ACID REDUCTOISOMERASE, MITOCHONDRIAL"/>
    <property type="match status" value="1"/>
</dbReference>
<dbReference type="Pfam" id="PF01450">
    <property type="entry name" value="KARI_C"/>
    <property type="match status" value="1"/>
</dbReference>
<dbReference type="Pfam" id="PF07991">
    <property type="entry name" value="KARI_N"/>
    <property type="match status" value="1"/>
</dbReference>
<dbReference type="PIRSF" id="PIRSF000116">
    <property type="entry name" value="IlvC_gammaproteo"/>
    <property type="match status" value="1"/>
</dbReference>
<dbReference type="SUPFAM" id="SSF48179">
    <property type="entry name" value="6-phosphogluconate dehydrogenase C-terminal domain-like"/>
    <property type="match status" value="1"/>
</dbReference>
<dbReference type="SUPFAM" id="SSF51735">
    <property type="entry name" value="NAD(P)-binding Rossmann-fold domains"/>
    <property type="match status" value="1"/>
</dbReference>
<dbReference type="PROSITE" id="PS51851">
    <property type="entry name" value="KARI_C"/>
    <property type="match status" value="1"/>
</dbReference>
<dbReference type="PROSITE" id="PS51850">
    <property type="entry name" value="KARI_N"/>
    <property type="match status" value="1"/>
</dbReference>
<feature type="chain" id="PRO_0000151360" description="Ketol-acid reductoisomerase (NADP(+))">
    <location>
        <begin position="1"/>
        <end position="334"/>
    </location>
</feature>
<feature type="domain" description="KARI N-terminal Rossmann" evidence="2">
    <location>
        <begin position="1"/>
        <end position="181"/>
    </location>
</feature>
<feature type="domain" description="KARI C-terminal knotted" evidence="3">
    <location>
        <begin position="182"/>
        <end position="327"/>
    </location>
</feature>
<feature type="active site" evidence="1">
    <location>
        <position position="107"/>
    </location>
</feature>
<feature type="binding site" evidence="1">
    <location>
        <begin position="25"/>
        <end position="28"/>
    </location>
    <ligand>
        <name>NADP(+)</name>
        <dbReference type="ChEBI" id="CHEBI:58349"/>
    </ligand>
</feature>
<feature type="binding site" evidence="1">
    <location>
        <position position="48"/>
    </location>
    <ligand>
        <name>NADP(+)</name>
        <dbReference type="ChEBI" id="CHEBI:58349"/>
    </ligand>
</feature>
<feature type="binding site" evidence="1">
    <location>
        <position position="52"/>
    </location>
    <ligand>
        <name>NADP(+)</name>
        <dbReference type="ChEBI" id="CHEBI:58349"/>
    </ligand>
</feature>
<feature type="binding site" evidence="1">
    <location>
        <begin position="82"/>
        <end position="85"/>
    </location>
    <ligand>
        <name>NADP(+)</name>
        <dbReference type="ChEBI" id="CHEBI:58349"/>
    </ligand>
</feature>
<feature type="binding site" evidence="1">
    <location>
        <position position="133"/>
    </location>
    <ligand>
        <name>NADP(+)</name>
        <dbReference type="ChEBI" id="CHEBI:58349"/>
    </ligand>
</feature>
<feature type="binding site" evidence="1">
    <location>
        <position position="190"/>
    </location>
    <ligand>
        <name>Mg(2+)</name>
        <dbReference type="ChEBI" id="CHEBI:18420"/>
        <label>1</label>
    </ligand>
</feature>
<feature type="binding site" evidence="1">
    <location>
        <position position="190"/>
    </location>
    <ligand>
        <name>Mg(2+)</name>
        <dbReference type="ChEBI" id="CHEBI:18420"/>
        <label>2</label>
    </ligand>
</feature>
<feature type="binding site" evidence="1">
    <location>
        <position position="194"/>
    </location>
    <ligand>
        <name>Mg(2+)</name>
        <dbReference type="ChEBI" id="CHEBI:18420"/>
        <label>1</label>
    </ligand>
</feature>
<feature type="binding site" evidence="1">
    <location>
        <position position="226"/>
    </location>
    <ligand>
        <name>Mg(2+)</name>
        <dbReference type="ChEBI" id="CHEBI:18420"/>
        <label>2</label>
    </ligand>
</feature>
<feature type="binding site" evidence="1">
    <location>
        <position position="230"/>
    </location>
    <ligand>
        <name>Mg(2+)</name>
        <dbReference type="ChEBI" id="CHEBI:18420"/>
        <label>2</label>
    </ligand>
</feature>
<feature type="binding site" evidence="1">
    <location>
        <position position="251"/>
    </location>
    <ligand>
        <name>substrate</name>
    </ligand>
</feature>
<gene>
    <name evidence="1" type="primary">ilvC</name>
    <name type="ordered locus">MW1980</name>
</gene>
<reference key="1">
    <citation type="journal article" date="2002" name="Lancet">
        <title>Genome and virulence determinants of high virulence community-acquired MRSA.</title>
        <authorList>
            <person name="Baba T."/>
            <person name="Takeuchi F."/>
            <person name="Kuroda M."/>
            <person name="Yuzawa H."/>
            <person name="Aoki K."/>
            <person name="Oguchi A."/>
            <person name="Nagai Y."/>
            <person name="Iwama N."/>
            <person name="Asano K."/>
            <person name="Naimi T."/>
            <person name="Kuroda H."/>
            <person name="Cui L."/>
            <person name="Yamamoto K."/>
            <person name="Hiramatsu K."/>
        </authorList>
    </citation>
    <scope>NUCLEOTIDE SEQUENCE [LARGE SCALE GENOMIC DNA]</scope>
    <source>
        <strain>MW2</strain>
    </source>
</reference>
<evidence type="ECO:0000255" key="1">
    <source>
        <dbReference type="HAMAP-Rule" id="MF_00435"/>
    </source>
</evidence>
<evidence type="ECO:0000255" key="2">
    <source>
        <dbReference type="PROSITE-ProRule" id="PRU01197"/>
    </source>
</evidence>
<evidence type="ECO:0000255" key="3">
    <source>
        <dbReference type="PROSITE-ProRule" id="PRU01198"/>
    </source>
</evidence>
<accession>P65153</accession>
<accession>Q99SJ6</accession>
<keyword id="KW-0028">Amino-acid biosynthesis</keyword>
<keyword id="KW-0100">Branched-chain amino acid biosynthesis</keyword>
<keyword id="KW-0460">Magnesium</keyword>
<keyword id="KW-0479">Metal-binding</keyword>
<keyword id="KW-0521">NADP</keyword>
<keyword id="KW-0560">Oxidoreductase</keyword>
<protein>
    <recommendedName>
        <fullName evidence="1">Ketol-acid reductoisomerase (NADP(+))</fullName>
        <shortName evidence="1">KARI</shortName>
        <ecNumber evidence="1">1.1.1.86</ecNumber>
    </recommendedName>
    <alternativeName>
        <fullName evidence="1">Acetohydroxy-acid isomeroreductase</fullName>
        <shortName evidence="1">AHIR</shortName>
    </alternativeName>
    <alternativeName>
        <fullName evidence="1">Alpha-keto-beta-hydroxylacyl reductoisomerase</fullName>
    </alternativeName>
    <alternativeName>
        <fullName evidence="1">Ketol-acid reductoisomerase type 1</fullName>
    </alternativeName>
    <alternativeName>
        <fullName evidence="1">Ketol-acid reductoisomerase type I</fullName>
    </alternativeName>
</protein>
<proteinExistence type="inferred from homology"/>